<protein>
    <recommendedName>
        <fullName evidence="1">GDP-mannose-dependent alpha-(1-6)-phosphatidylinositol monomannoside mannosyltransferase</fullName>
        <ecNumber evidence="1">2.4.1.346</ecNumber>
    </recommendedName>
    <alternativeName>
        <fullName evidence="1">Alpha-D-mannose-alpha-(1-6)-phosphatidylmyo-inositol-mannosyltransferase</fullName>
    </alternativeName>
    <alternativeName>
        <fullName evidence="1">Alpha-mannosyltransferase</fullName>
        <shortName evidence="1">Alpha-ManT</shortName>
    </alternativeName>
    <alternativeName>
        <fullName evidence="3">Guanosine diphosphomannose-phosphatidyl-inositol alpha-mannosyltransferase</fullName>
    </alternativeName>
    <alternativeName>
        <fullName evidence="1">Phosphatidylinositol alpha-mannosyltransferase</fullName>
        <shortName evidence="1">PI alpha-mannosyltransferase</shortName>
    </alternativeName>
</protein>
<organism>
    <name type="scientific">Mycobacterium tuberculosis (strain CDC 1551 / Oshkosh)</name>
    <dbReference type="NCBI Taxonomy" id="83331"/>
    <lineage>
        <taxon>Bacteria</taxon>
        <taxon>Bacillati</taxon>
        <taxon>Actinomycetota</taxon>
        <taxon>Actinomycetes</taxon>
        <taxon>Mycobacteriales</taxon>
        <taxon>Mycobacteriaceae</taxon>
        <taxon>Mycobacterium</taxon>
        <taxon>Mycobacterium tuberculosis complex</taxon>
    </lineage>
</organism>
<gene>
    <name evidence="1" type="primary">pimB</name>
    <name type="ordered locus">MT2243</name>
</gene>
<sequence length="385" mass="41220">MSRVLLVTNDFPPRRGGIQSYLGEFVGRLVGSRAHAMTVYAPQWKGADAFDDAARAAGYRVVRHPSTVMLPGPTVDVRMRRLIAEHDIETVWFGAAAPLALLAPRARLAGASRVLASTHGHEVGWSMLPVARSVLRRIGDGTDVVTFVSSYTRSRFASAFGPAASLEYLPPGVDTDRFRPDPAARAELRKRYRLGERPTVVCLSRLVPRKGQDTLVTALPSIRRRVDGAALVIVGGGPYLETLRKLAHDCGVADHVTFTGGVATDELPAHHALADVFAMPCRTRGAGMDVEGLGIVFLEASAAGVPVIAGNSGGAPETVQHNKTGLVVDGRSVDRVADAVAELLIDRDRAVAMGAAGREWVTAQWRWDTLAAKLADFLRGDDAAR</sequence>
<reference key="1">
    <citation type="journal article" date="2002" name="J. Bacteriol.">
        <title>Whole-genome comparison of Mycobacterium tuberculosis clinical and laboratory strains.</title>
        <authorList>
            <person name="Fleischmann R.D."/>
            <person name="Alland D."/>
            <person name="Eisen J.A."/>
            <person name="Carpenter L."/>
            <person name="White O."/>
            <person name="Peterson J.D."/>
            <person name="DeBoy R.T."/>
            <person name="Dodson R.J."/>
            <person name="Gwinn M.L."/>
            <person name="Haft D.H."/>
            <person name="Hickey E.K."/>
            <person name="Kolonay J.F."/>
            <person name="Nelson W.C."/>
            <person name="Umayam L.A."/>
            <person name="Ermolaeva M.D."/>
            <person name="Salzberg S.L."/>
            <person name="Delcher A."/>
            <person name="Utterback T.R."/>
            <person name="Weidman J.F."/>
            <person name="Khouri H.M."/>
            <person name="Gill J."/>
            <person name="Mikula A."/>
            <person name="Bishai W."/>
            <person name="Jacobs W.R. Jr."/>
            <person name="Venter J.C."/>
            <person name="Fraser C.M."/>
        </authorList>
    </citation>
    <scope>NUCLEOTIDE SEQUENCE [LARGE SCALE GENOMIC DNA]</scope>
    <source>
        <strain>CDC 1551 / Oshkosh</strain>
    </source>
</reference>
<proteinExistence type="inferred from homology"/>
<dbReference type="EC" id="2.4.1.346" evidence="1"/>
<dbReference type="EMBL" id="AE000516">
    <property type="protein sequence ID" value="AAK46529.1"/>
    <property type="molecule type" value="Genomic_DNA"/>
</dbReference>
<dbReference type="PIR" id="F70937">
    <property type="entry name" value="F70937"/>
</dbReference>
<dbReference type="RefSeq" id="WP_003411369.1">
    <property type="nucleotide sequence ID" value="NZ_KK341227.1"/>
</dbReference>
<dbReference type="SMR" id="P9WMZ2"/>
<dbReference type="CAZy" id="GT4">
    <property type="family name" value="Glycosyltransferase Family 4"/>
</dbReference>
<dbReference type="KEGG" id="mtc:MT2243"/>
<dbReference type="PATRIC" id="fig|83331.31.peg.2419"/>
<dbReference type="HOGENOM" id="CLU_009583_2_5_11"/>
<dbReference type="UniPathway" id="UPA00949"/>
<dbReference type="Proteomes" id="UP000001020">
    <property type="component" value="Chromosome"/>
</dbReference>
<dbReference type="GO" id="GO:0016758">
    <property type="term" value="F:hexosyltransferase activity"/>
    <property type="evidence" value="ECO:0007669"/>
    <property type="project" value="TreeGrafter"/>
</dbReference>
<dbReference type="GO" id="GO:1901137">
    <property type="term" value="P:carbohydrate derivative biosynthetic process"/>
    <property type="evidence" value="ECO:0007669"/>
    <property type="project" value="UniProtKB-ARBA"/>
</dbReference>
<dbReference type="GO" id="GO:1903509">
    <property type="term" value="P:liposaccharide metabolic process"/>
    <property type="evidence" value="ECO:0007669"/>
    <property type="project" value="UniProtKB-ARBA"/>
</dbReference>
<dbReference type="GO" id="GO:0046488">
    <property type="term" value="P:phosphatidylinositol metabolic process"/>
    <property type="evidence" value="ECO:0007669"/>
    <property type="project" value="UniProtKB-UniPathway"/>
</dbReference>
<dbReference type="GO" id="GO:0008654">
    <property type="term" value="P:phospholipid biosynthetic process"/>
    <property type="evidence" value="ECO:0007669"/>
    <property type="project" value="UniProtKB-KW"/>
</dbReference>
<dbReference type="CDD" id="cd03801">
    <property type="entry name" value="GT4_PimA-like"/>
    <property type="match status" value="1"/>
</dbReference>
<dbReference type="FunFam" id="3.40.50.2000:FF:000069">
    <property type="entry name" value="Alpha-(1-6)-phosphatidylinositol monomannoside mannosyltransferase"/>
    <property type="match status" value="1"/>
</dbReference>
<dbReference type="FunFam" id="3.40.50.2000:FF:000115">
    <property type="entry name" value="Alpha-(1-6)-phosphatidylinositol monomannoside mannosyltransferase"/>
    <property type="match status" value="1"/>
</dbReference>
<dbReference type="Gene3D" id="3.40.50.2000">
    <property type="entry name" value="Glycogen Phosphorylase B"/>
    <property type="match status" value="2"/>
</dbReference>
<dbReference type="InterPro" id="IPR001296">
    <property type="entry name" value="Glyco_trans_1"/>
</dbReference>
<dbReference type="InterPro" id="IPR028098">
    <property type="entry name" value="Glyco_trans_4-like_N"/>
</dbReference>
<dbReference type="InterPro" id="IPR050194">
    <property type="entry name" value="Glycosyltransferase_grp1"/>
</dbReference>
<dbReference type="PANTHER" id="PTHR45947">
    <property type="entry name" value="SULFOQUINOVOSYL TRANSFERASE SQD2"/>
    <property type="match status" value="1"/>
</dbReference>
<dbReference type="PANTHER" id="PTHR45947:SF3">
    <property type="entry name" value="SULFOQUINOVOSYL TRANSFERASE SQD2"/>
    <property type="match status" value="1"/>
</dbReference>
<dbReference type="Pfam" id="PF13439">
    <property type="entry name" value="Glyco_transf_4"/>
    <property type="match status" value="1"/>
</dbReference>
<dbReference type="Pfam" id="PF00534">
    <property type="entry name" value="Glycos_transf_1"/>
    <property type="match status" value="1"/>
</dbReference>
<dbReference type="SUPFAM" id="SSF53756">
    <property type="entry name" value="UDP-Glycosyltransferase/glycogen phosphorylase"/>
    <property type="match status" value="1"/>
</dbReference>
<name>PIMB_MYCTO</name>
<feature type="chain" id="PRO_0000427217" description="GDP-mannose-dependent alpha-(1-6)-phosphatidylinositol monomannoside mannosyltransferase">
    <location>
        <begin position="1"/>
        <end position="385"/>
    </location>
</feature>
<feature type="binding site" evidence="2">
    <location>
        <position position="205"/>
    </location>
    <ligand>
        <name>GDP-alpha-D-mannose</name>
        <dbReference type="ChEBI" id="CHEBI:57527"/>
    </ligand>
</feature>
<feature type="binding site" evidence="2">
    <location>
        <position position="210"/>
    </location>
    <ligand>
        <name>GDP-alpha-D-mannose</name>
        <dbReference type="ChEBI" id="CHEBI:57527"/>
    </ligand>
</feature>
<feature type="binding site" evidence="2">
    <location>
        <position position="262"/>
    </location>
    <ligand>
        <name>GDP-alpha-D-mannose</name>
        <dbReference type="ChEBI" id="CHEBI:57527"/>
    </ligand>
</feature>
<feature type="binding site" evidence="2">
    <location>
        <position position="299"/>
    </location>
    <ligand>
        <name>GDP-alpha-D-mannose</name>
        <dbReference type="ChEBI" id="CHEBI:57527"/>
    </ligand>
</feature>
<evidence type="ECO:0000250" key="1">
    <source>
        <dbReference type="UniProtKB" id="A0R043"/>
    </source>
</evidence>
<evidence type="ECO:0000250" key="2">
    <source>
        <dbReference type="UniProtKB" id="Q8NNK8"/>
    </source>
</evidence>
<evidence type="ECO:0000305" key="3"/>
<accession>P9WMZ2</accession>
<accession>L0T936</accession>
<accession>O53522</accession>
<accession>Q7D7D7</accession>
<comment type="function">
    <text evidence="1">Involved in the biosynthesis of phosphatidyl-myo-inositol mannosides (PIM) which are early precursors in the biosynthesis of lipomannans (LM) and lipoarabinomannans (LAM). Catalyzes the addition of a mannosyl residue from GDP-D-mannose (GDP-Man) to the position 6 of a phosphatidyl-myo-inositol bearing an alpha-1,2-linked mannose residue (PIM1) to generate phosphatidyl-myo-inositol bearing alpha-1,2- and alpha-1,6-linked mannose residues (Ac1PIM2). PimB also catalyzes the addition of a mannosyl residue from GDP-Man to the position 6 of phosphatidyl-myo-inositol bearing an acylated alpha-1,2-linked mannose residue (Ac1PIM1) to generate monoacylated phosphatidyl-myo-inositol bearing alpha-1,2- and alpha-1,6-linked mannose residues (Ac1PIM2). The addition of the second mannosyl residue by PimB preferentially occurs before the acylation of the mannosyl residue transferred by PimA. Also able to transfer a mannosyl residue from GDP-Man to the position 6 of a phosphatidyl-myo-inositol (PI), but this reaction is very slow.</text>
</comment>
<comment type="catalytic activity">
    <reaction evidence="1">
        <text>a 1,2-diacyl-sn-glycero-3-phospho-[alpha-D-mannopyranosyl-(1&lt;-&gt;6)-D-myo-inositol] + GDP-alpha-D-mannose = a 2,6-O-bis(alpha-D-mannopyranosyl)-1-phosphatidyl-1D-myo-inositol + GDP + H(+)</text>
        <dbReference type="Rhea" id="RHEA:52440"/>
        <dbReference type="ChEBI" id="CHEBI:15378"/>
        <dbReference type="ChEBI" id="CHEBI:57527"/>
        <dbReference type="ChEBI" id="CHEBI:58189"/>
        <dbReference type="ChEBI" id="CHEBI:87673"/>
        <dbReference type="ChEBI" id="CHEBI:136624"/>
        <dbReference type="EC" id="2.4.1.346"/>
    </reaction>
</comment>
<comment type="catalytic activity">
    <reaction evidence="1">
        <text>a 1,2-diacyl-sn-glycero-3-phospho-[alpha-D-6-acyl-mannopyranosyl-(1&lt;-&gt;6)-D-myo-inositol] + GDP-alpha-D-mannose = a 2-O-(alpha-D-mannosyl)-6-O-(6-O-acyl-alpha-D-mannosyl)-1-phosphatidyl-1D-myo-inositol + GDP + H(+)</text>
        <dbReference type="Rhea" id="RHEA:52444"/>
        <dbReference type="ChEBI" id="CHEBI:15378"/>
        <dbReference type="ChEBI" id="CHEBI:57527"/>
        <dbReference type="ChEBI" id="CHEBI:58189"/>
        <dbReference type="ChEBI" id="CHEBI:88053"/>
        <dbReference type="ChEBI" id="CHEBI:136625"/>
        <dbReference type="EC" id="2.4.1.346"/>
    </reaction>
</comment>
<comment type="pathway">
    <text evidence="1">Phospholipid metabolism; phosphatidylinositol metabolism.</text>
</comment>
<comment type="similarity">
    <text evidence="3">Belongs to the glycosyltransferase group 1 family. Glycosyltransferase 4 subfamily.</text>
</comment>
<keyword id="KW-0328">Glycosyltransferase</keyword>
<keyword id="KW-0444">Lipid biosynthesis</keyword>
<keyword id="KW-0443">Lipid metabolism</keyword>
<keyword id="KW-0594">Phospholipid biosynthesis</keyword>
<keyword id="KW-1208">Phospholipid metabolism</keyword>
<keyword id="KW-1185">Reference proteome</keyword>
<keyword id="KW-0808">Transferase</keyword>
<keyword id="KW-0843">Virulence</keyword>